<evidence type="ECO:0000255" key="1"/>
<evidence type="ECO:0000255" key="2">
    <source>
        <dbReference type="PROSITE-ProRule" id="PRU00639"/>
    </source>
</evidence>
<evidence type="ECO:0000269" key="3">
    <source>
    </source>
</evidence>
<evidence type="ECO:0000269" key="4">
    <source>
    </source>
</evidence>
<evidence type="ECO:0000303" key="5">
    <source>
    </source>
</evidence>
<evidence type="ECO:0000305" key="6"/>
<evidence type="ECO:0000305" key="7">
    <source>
    </source>
</evidence>
<organism>
    <name type="scientific">Arabidopsis thaliana</name>
    <name type="common">Mouse-ear cress</name>
    <dbReference type="NCBI Taxonomy" id="3702"/>
    <lineage>
        <taxon>Eukaryota</taxon>
        <taxon>Viridiplantae</taxon>
        <taxon>Streptophyta</taxon>
        <taxon>Embryophyta</taxon>
        <taxon>Tracheophyta</taxon>
        <taxon>Spermatophyta</taxon>
        <taxon>Magnoliopsida</taxon>
        <taxon>eudicotyledons</taxon>
        <taxon>Gunneridae</taxon>
        <taxon>Pentapetalae</taxon>
        <taxon>rosids</taxon>
        <taxon>malvids</taxon>
        <taxon>Brassicales</taxon>
        <taxon>Brassicaceae</taxon>
        <taxon>Camelineae</taxon>
        <taxon>Arabidopsis</taxon>
    </lineage>
</organism>
<protein>
    <recommendedName>
        <fullName evidence="6">Beta-1,3-galactosyltransferase GALT1</fullName>
        <ecNumber evidence="3">2.4.1.-</ecNumber>
    </recommendedName>
    <alternativeName>
        <fullName evidence="6">Beta-1,3-galactosyltransferase 15</fullName>
    </alternativeName>
    <alternativeName>
        <fullName evidence="5">Galactosyltransferase 1</fullName>
    </alternativeName>
</protein>
<name>B3GTF_ARATH</name>
<reference key="1">
    <citation type="journal article" date="2007" name="Plant Cell">
        <title>A unique beta-1,3-galactosyltransferase is indispensable for the biosynthesis of N-glycans containing Lewis a structures in Arabidopsis thaliana.</title>
        <authorList>
            <person name="Strasser R."/>
            <person name="Bondili J.S."/>
            <person name="Vavra U."/>
            <person name="Schoberer J."/>
            <person name="Svoboda B."/>
            <person name="Gloessl J."/>
            <person name="Leonard R."/>
            <person name="Stadlmann J."/>
            <person name="Altmann F."/>
            <person name="Steinkellner H."/>
            <person name="Mach L."/>
        </authorList>
    </citation>
    <scope>NUCLEOTIDE SEQUENCE [MRNA]</scope>
    <scope>FUNCTION</scope>
    <scope>COFACTOR</scope>
    <scope>SUBCELLULAR LOCATION</scope>
    <scope>TISSUE SPECIFICITY</scope>
    <source>
        <strain>cv. Columbia</strain>
        <tissue>Silique</tissue>
    </source>
</reference>
<reference key="2">
    <citation type="journal article" date="2014" name="Plant J.">
        <title>The plant glycosyltransferase clone collection for functional genomics.</title>
        <authorList>
            <person name="Lao J."/>
            <person name="Oikawa A."/>
            <person name="Bromley J.R."/>
            <person name="McInerney P."/>
            <person name="Suttangkakul A."/>
            <person name="Smith-Moritz A.M."/>
            <person name="Plahar H."/>
            <person name="Chiu T.-Y."/>
            <person name="Gonzalez Fernandez-Nino S.M.G."/>
            <person name="Ebert B."/>
            <person name="Yang F."/>
            <person name="Christiansen K.M."/>
            <person name="Hansen S.F."/>
            <person name="Stonebloom S."/>
            <person name="Adams P.D."/>
            <person name="Ronald P.C."/>
            <person name="Hillson N.J."/>
            <person name="Hadi M.Z."/>
            <person name="Vega-Sanchez M.E."/>
            <person name="Loque D."/>
            <person name="Scheller H.V."/>
            <person name="Heazlewood J.L."/>
        </authorList>
    </citation>
    <scope>NUCLEOTIDE SEQUENCE [MRNA]</scope>
    <source>
        <strain>cv. Columbia</strain>
    </source>
</reference>
<reference key="3">
    <citation type="journal article" date="2000" name="Nature">
        <title>Sequence and analysis of chromosome 1 of the plant Arabidopsis thaliana.</title>
        <authorList>
            <person name="Theologis A."/>
            <person name="Ecker J.R."/>
            <person name="Palm C.J."/>
            <person name="Federspiel N.A."/>
            <person name="Kaul S."/>
            <person name="White O."/>
            <person name="Alonso J."/>
            <person name="Altafi H."/>
            <person name="Araujo R."/>
            <person name="Bowman C.L."/>
            <person name="Brooks S.Y."/>
            <person name="Buehler E."/>
            <person name="Chan A."/>
            <person name="Chao Q."/>
            <person name="Chen H."/>
            <person name="Cheuk R.F."/>
            <person name="Chin C.W."/>
            <person name="Chung M.K."/>
            <person name="Conn L."/>
            <person name="Conway A.B."/>
            <person name="Conway A.R."/>
            <person name="Creasy T.H."/>
            <person name="Dewar K."/>
            <person name="Dunn P."/>
            <person name="Etgu P."/>
            <person name="Feldblyum T.V."/>
            <person name="Feng J.-D."/>
            <person name="Fong B."/>
            <person name="Fujii C.Y."/>
            <person name="Gill J.E."/>
            <person name="Goldsmith A.D."/>
            <person name="Haas B."/>
            <person name="Hansen N.F."/>
            <person name="Hughes B."/>
            <person name="Huizar L."/>
            <person name="Hunter J.L."/>
            <person name="Jenkins J."/>
            <person name="Johnson-Hopson C."/>
            <person name="Khan S."/>
            <person name="Khaykin E."/>
            <person name="Kim C.J."/>
            <person name="Koo H.L."/>
            <person name="Kremenetskaia I."/>
            <person name="Kurtz D.B."/>
            <person name="Kwan A."/>
            <person name="Lam B."/>
            <person name="Langin-Hooper S."/>
            <person name="Lee A."/>
            <person name="Lee J.M."/>
            <person name="Lenz C.A."/>
            <person name="Li J.H."/>
            <person name="Li Y.-P."/>
            <person name="Lin X."/>
            <person name="Liu S.X."/>
            <person name="Liu Z.A."/>
            <person name="Luros J.S."/>
            <person name="Maiti R."/>
            <person name="Marziali A."/>
            <person name="Militscher J."/>
            <person name="Miranda M."/>
            <person name="Nguyen M."/>
            <person name="Nierman W.C."/>
            <person name="Osborne B.I."/>
            <person name="Pai G."/>
            <person name="Peterson J."/>
            <person name="Pham P.K."/>
            <person name="Rizzo M."/>
            <person name="Rooney T."/>
            <person name="Rowley D."/>
            <person name="Sakano H."/>
            <person name="Salzberg S.L."/>
            <person name="Schwartz J.R."/>
            <person name="Shinn P."/>
            <person name="Southwick A.M."/>
            <person name="Sun H."/>
            <person name="Tallon L.J."/>
            <person name="Tambunga G."/>
            <person name="Toriumi M.J."/>
            <person name="Town C.D."/>
            <person name="Utterback T."/>
            <person name="Van Aken S."/>
            <person name="Vaysberg M."/>
            <person name="Vysotskaia V.S."/>
            <person name="Walker M."/>
            <person name="Wu D."/>
            <person name="Yu G."/>
            <person name="Fraser C.M."/>
            <person name="Venter J.C."/>
            <person name="Davis R.W."/>
        </authorList>
    </citation>
    <scope>NUCLEOTIDE SEQUENCE [LARGE SCALE GENOMIC DNA]</scope>
    <source>
        <strain>cv. Columbia</strain>
    </source>
</reference>
<reference key="4">
    <citation type="journal article" date="2017" name="Plant J.">
        <title>Araport11: a complete reannotation of the Arabidopsis thaliana reference genome.</title>
        <authorList>
            <person name="Cheng C.Y."/>
            <person name="Krishnakumar V."/>
            <person name="Chan A.P."/>
            <person name="Thibaud-Nissen F."/>
            <person name="Schobel S."/>
            <person name="Town C.D."/>
        </authorList>
    </citation>
    <scope>GENOME REANNOTATION</scope>
    <source>
        <strain>cv. Columbia</strain>
    </source>
</reference>
<reference key="5">
    <citation type="journal article" date="2003" name="Science">
        <title>Empirical analysis of transcriptional activity in the Arabidopsis genome.</title>
        <authorList>
            <person name="Yamada K."/>
            <person name="Lim J."/>
            <person name="Dale J.M."/>
            <person name="Chen H."/>
            <person name="Shinn P."/>
            <person name="Palm C.J."/>
            <person name="Southwick A.M."/>
            <person name="Wu H.C."/>
            <person name="Kim C.J."/>
            <person name="Nguyen M."/>
            <person name="Pham P.K."/>
            <person name="Cheuk R.F."/>
            <person name="Karlin-Newmann G."/>
            <person name="Liu S.X."/>
            <person name="Lam B."/>
            <person name="Sakano H."/>
            <person name="Wu T."/>
            <person name="Yu G."/>
            <person name="Miranda M."/>
            <person name="Quach H.L."/>
            <person name="Tripp M."/>
            <person name="Chang C.H."/>
            <person name="Lee J.M."/>
            <person name="Toriumi M.J."/>
            <person name="Chan M.M."/>
            <person name="Tang C.C."/>
            <person name="Onodera C.S."/>
            <person name="Deng J.M."/>
            <person name="Akiyama K."/>
            <person name="Ansari Y."/>
            <person name="Arakawa T."/>
            <person name="Banh J."/>
            <person name="Banno F."/>
            <person name="Bowser L."/>
            <person name="Brooks S.Y."/>
            <person name="Carninci P."/>
            <person name="Chao Q."/>
            <person name="Choy N."/>
            <person name="Enju A."/>
            <person name="Goldsmith A.D."/>
            <person name="Gurjal M."/>
            <person name="Hansen N.F."/>
            <person name="Hayashizaki Y."/>
            <person name="Johnson-Hopson C."/>
            <person name="Hsuan V.W."/>
            <person name="Iida K."/>
            <person name="Karnes M."/>
            <person name="Khan S."/>
            <person name="Koesema E."/>
            <person name="Ishida J."/>
            <person name="Jiang P.X."/>
            <person name="Jones T."/>
            <person name="Kawai J."/>
            <person name="Kamiya A."/>
            <person name="Meyers C."/>
            <person name="Nakajima M."/>
            <person name="Narusaka M."/>
            <person name="Seki M."/>
            <person name="Sakurai T."/>
            <person name="Satou M."/>
            <person name="Tamse R."/>
            <person name="Vaysberg M."/>
            <person name="Wallender E.K."/>
            <person name="Wong C."/>
            <person name="Yamamura Y."/>
            <person name="Yuan S."/>
            <person name="Shinozaki K."/>
            <person name="Davis R.W."/>
            <person name="Theologis A."/>
            <person name="Ecker J.R."/>
        </authorList>
    </citation>
    <scope>NUCLEOTIDE SEQUENCE [LARGE SCALE MRNA]</scope>
    <source>
        <strain>cv. Columbia</strain>
    </source>
</reference>
<reference key="6">
    <citation type="journal article" date="2008" name="Plant Mol. Biol.">
        <title>Identification of a novel group of putative Arabidopsis thaliana beta-(1,3)-galactosyltransferases.</title>
        <authorList>
            <person name="Qu Y."/>
            <person name="Egelund J."/>
            <person name="Gilson P.R."/>
            <person name="Houghton F."/>
            <person name="Gleeson P.A."/>
            <person name="Schultz C.J."/>
            <person name="Bacic A."/>
        </authorList>
    </citation>
    <scope>GENE FAMILY</scope>
    <scope>NOMENCLATURE</scope>
</reference>
<reference key="7">
    <citation type="journal article" date="2013" name="Plant Physiol.">
        <title>Time-resolved fluorescence imaging reveals differential interactions of N-glycan processing enzymes across the Golgi stack in planta.</title>
        <authorList>
            <person name="Schoberer J."/>
            <person name="Liebminger E."/>
            <person name="Botchway S.W."/>
            <person name="Strasser R."/>
            <person name="Hawes C."/>
        </authorList>
    </citation>
    <scope>INTERACTION WITH GMII</scope>
    <scope>SUBCELLULAR LOCATION</scope>
</reference>
<sequence>MKRFYGGLLVVSMCMFLTVYRYVDLNTPVEKPYITAAASVVVTPNTTLPMEWLRITLPDFMKEARNTQEAISGDDIAVVSGLFVEQNVSKEEREPLLTWNRLESLVDNAQSLVNGVDAIKEAGIVWESLVSAVEAKKLVDVNENQTRKGKEELCPQFLSKMNATEADGSSLKLQIPCGLTQGSSITVIGIPDGLVGSFRIDLTGQPLPGEPDPPIIVHYNVRLLGDKSTEDPVIVQNSWTASQDWGAEERCPKFDPDMNKKVDDLDECNKMVGGEINRTSSTSLQSNTSRGVPVAREASKHEKYFPFKQGFLSVATLRVGTEGMQMTVDGKHITSFAFRDTLEPWLVSEIRITGDFRLISILASGLPTSEESEHVVDLEALKSPTLSPLRPLDLVIGVFSTANNFKRRMAVRRTWMQYDDVRSGRVAVRFFVGLHKSPLVNLELWNEARTYGDVQLMPFVDYYSLISWKTLAICIFGTEVDSAKFIMKTDDDAFVRVDEVLLSLSMTNNTRGLIYGLINSDSQPIRNPDSKWYISYEEWPEEKYPPWAHGPGYIVSRDIAESVGKLFKEGNLKMFKLEDVAMGIWIAELTKHGLEPHYENDGRIISDGCKDGYVVAHYQSPAEMTCLWRKYQETKRSLCCREW</sequence>
<dbReference type="EC" id="2.4.1.-" evidence="3"/>
<dbReference type="EMBL" id="EF428439">
    <property type="protein sequence ID" value="ABR58858.1"/>
    <property type="molecule type" value="mRNA"/>
</dbReference>
<dbReference type="EMBL" id="KJ138985">
    <property type="protein sequence ID" value="AHL38925.1"/>
    <property type="molecule type" value="mRNA"/>
</dbReference>
<dbReference type="EMBL" id="AC006535">
    <property type="protein sequence ID" value="AAF87039.1"/>
    <property type="status" value="ALT_SEQ"/>
    <property type="molecule type" value="Genomic_DNA"/>
</dbReference>
<dbReference type="EMBL" id="CP002684">
    <property type="protein sequence ID" value="AEE30744.1"/>
    <property type="molecule type" value="Genomic_DNA"/>
</dbReference>
<dbReference type="EMBL" id="CP002684">
    <property type="protein sequence ID" value="ANM60449.1"/>
    <property type="molecule type" value="Genomic_DNA"/>
</dbReference>
<dbReference type="EMBL" id="AY133724">
    <property type="protein sequence ID" value="AAM91658.1"/>
    <property type="molecule type" value="mRNA"/>
</dbReference>
<dbReference type="PIR" id="F86394">
    <property type="entry name" value="F86394"/>
</dbReference>
<dbReference type="RefSeq" id="NP_001319087.1">
    <property type="nucleotide sequence ID" value="NM_001332728.1"/>
</dbReference>
<dbReference type="RefSeq" id="NP_174003.1">
    <property type="nucleotide sequence ID" value="NM_102445.4"/>
</dbReference>
<dbReference type="SMR" id="Q8L7F9"/>
<dbReference type="FunCoup" id="Q8L7F9">
    <property type="interactions" value="408"/>
</dbReference>
<dbReference type="STRING" id="3702.Q8L7F9"/>
<dbReference type="CAZy" id="GT31">
    <property type="family name" value="Glycosyltransferase Family 31"/>
</dbReference>
<dbReference type="GlyCosmos" id="Q8L7F9">
    <property type="glycosylation" value="7 sites, No reported glycans"/>
</dbReference>
<dbReference type="GlyGen" id="Q8L7F9">
    <property type="glycosylation" value="7 sites"/>
</dbReference>
<dbReference type="iPTMnet" id="Q8L7F9"/>
<dbReference type="PaxDb" id="3702-AT1G26810.1"/>
<dbReference type="ProteomicsDB" id="240962"/>
<dbReference type="EnsemblPlants" id="AT1G26810.1">
    <property type="protein sequence ID" value="AT1G26810.1"/>
    <property type="gene ID" value="AT1G26810"/>
</dbReference>
<dbReference type="EnsemblPlants" id="AT1G26810.2">
    <property type="protein sequence ID" value="AT1G26810.2"/>
    <property type="gene ID" value="AT1G26810"/>
</dbReference>
<dbReference type="GeneID" id="839224"/>
<dbReference type="Gramene" id="AT1G26810.1">
    <property type="protein sequence ID" value="AT1G26810.1"/>
    <property type="gene ID" value="AT1G26810"/>
</dbReference>
<dbReference type="Gramene" id="AT1G26810.2">
    <property type="protein sequence ID" value="AT1G26810.2"/>
    <property type="gene ID" value="AT1G26810"/>
</dbReference>
<dbReference type="KEGG" id="ath:AT1G26810"/>
<dbReference type="Araport" id="AT1G26810"/>
<dbReference type="TAIR" id="AT1G26810">
    <property type="gene designation" value="GALT1"/>
</dbReference>
<dbReference type="eggNOG" id="KOG2287">
    <property type="taxonomic scope" value="Eukaryota"/>
</dbReference>
<dbReference type="HOGENOM" id="CLU_017063_1_0_1"/>
<dbReference type="InParanoid" id="Q8L7F9"/>
<dbReference type="OMA" id="ICVFGTE"/>
<dbReference type="PhylomeDB" id="Q8L7F9"/>
<dbReference type="BioCyc" id="ARA:AT1G26810-MONOMER"/>
<dbReference type="BioCyc" id="MetaCyc:AT1G26810-MONOMER"/>
<dbReference type="UniPathway" id="UPA00378"/>
<dbReference type="PRO" id="PR:Q8L7F9"/>
<dbReference type="Proteomes" id="UP000006548">
    <property type="component" value="Chromosome 1"/>
</dbReference>
<dbReference type="ExpressionAtlas" id="Q8L7F9">
    <property type="expression patterns" value="baseline and differential"/>
</dbReference>
<dbReference type="GO" id="GO:0005794">
    <property type="term" value="C:Golgi apparatus"/>
    <property type="evidence" value="ECO:0000314"/>
    <property type="project" value="TAIR"/>
</dbReference>
<dbReference type="GO" id="GO:0000139">
    <property type="term" value="C:Golgi membrane"/>
    <property type="evidence" value="ECO:0007669"/>
    <property type="project" value="UniProtKB-SubCell"/>
</dbReference>
<dbReference type="GO" id="GO:0030246">
    <property type="term" value="F:carbohydrate binding"/>
    <property type="evidence" value="ECO:0007669"/>
    <property type="project" value="InterPro"/>
</dbReference>
<dbReference type="GO" id="GO:0010488">
    <property type="term" value="F:UDP-galactose:N-glycan beta-1,3-galactosyltransferase activity"/>
    <property type="evidence" value="ECO:0000314"/>
    <property type="project" value="TAIR"/>
</dbReference>
<dbReference type="GO" id="GO:0010493">
    <property type="term" value="P:Lewis a epitope biosynthetic process"/>
    <property type="evidence" value="ECO:0000315"/>
    <property type="project" value="TAIR"/>
</dbReference>
<dbReference type="GO" id="GO:0006486">
    <property type="term" value="P:protein glycosylation"/>
    <property type="evidence" value="ECO:0007669"/>
    <property type="project" value="UniProtKB-UniPathway"/>
</dbReference>
<dbReference type="CDD" id="cd00070">
    <property type="entry name" value="GLECT"/>
    <property type="match status" value="1"/>
</dbReference>
<dbReference type="FunFam" id="3.90.550.50:FF:000015">
    <property type="entry name" value="Beta-1,3-galactosyltransferase GALT1"/>
    <property type="match status" value="1"/>
</dbReference>
<dbReference type="Gene3D" id="2.60.120.200">
    <property type="match status" value="1"/>
</dbReference>
<dbReference type="Gene3D" id="3.90.550.50">
    <property type="match status" value="1"/>
</dbReference>
<dbReference type="InterPro" id="IPR013320">
    <property type="entry name" value="ConA-like_dom_sf"/>
</dbReference>
<dbReference type="InterPro" id="IPR001079">
    <property type="entry name" value="Galectin_CRD"/>
</dbReference>
<dbReference type="InterPro" id="IPR002659">
    <property type="entry name" value="Glyco_trans_31"/>
</dbReference>
<dbReference type="PANTHER" id="PTHR11214:SF129">
    <property type="entry name" value="BETA-1,3-GALACTOSYLTRANSFERASE GALT1"/>
    <property type="match status" value="1"/>
</dbReference>
<dbReference type="PANTHER" id="PTHR11214">
    <property type="entry name" value="BETA-1,3-N-ACETYLGLUCOSAMINYLTRANSFERASE"/>
    <property type="match status" value="1"/>
</dbReference>
<dbReference type="Pfam" id="PF00337">
    <property type="entry name" value="Gal-bind_lectin"/>
    <property type="match status" value="1"/>
</dbReference>
<dbReference type="Pfam" id="PF01762">
    <property type="entry name" value="Galactosyl_T"/>
    <property type="match status" value="1"/>
</dbReference>
<dbReference type="SMART" id="SM00908">
    <property type="entry name" value="Gal-bind_lectin"/>
    <property type="match status" value="1"/>
</dbReference>
<dbReference type="SUPFAM" id="SSF49899">
    <property type="entry name" value="Concanavalin A-like lectins/glucanases"/>
    <property type="match status" value="1"/>
</dbReference>
<dbReference type="PROSITE" id="PS51304">
    <property type="entry name" value="GALECTIN"/>
    <property type="match status" value="1"/>
</dbReference>
<accession>Q8L7F9</accession>
<accession>Q9LQX1</accession>
<accession>W8Q3R0</accession>
<gene>
    <name evidence="5" type="primary">GALT1</name>
    <name evidence="7" type="synonym">B3GALT15</name>
    <name type="ordered locus">At1g26810</name>
    <name type="ORF">T24P13.20</name>
</gene>
<proteinExistence type="evidence at protein level"/>
<comment type="function">
    <text evidence="3">Beta-1,3-galactosyltransferase that transfers galactose from UDP-galactose to substrates with a terminal beta-N-acetylglucosamine (beta-GlcNAc) residue. Involved in the biosynthesis of N-glycans containing Lewis a structures (with the combination of FUT13).</text>
</comment>
<comment type="cofactor">
    <cofactor evidence="3">
        <name>Mn(2+)</name>
        <dbReference type="ChEBI" id="CHEBI:29035"/>
    </cofactor>
</comment>
<comment type="pathway">
    <text evidence="6">Protein modification; protein glycosylation.</text>
</comment>
<comment type="subunit">
    <text evidence="4">Interacts with GMII.</text>
</comment>
<comment type="subcellular location">
    <subcellularLocation>
        <location evidence="3 4">Golgi apparatus membrane</location>
        <topology evidence="6">Single-pass type II membrane protein</topology>
    </subcellularLocation>
</comment>
<comment type="tissue specificity">
    <text evidence="3">Expressed in stems and siliques.</text>
</comment>
<comment type="similarity">
    <text evidence="6">Belongs to the glycosyltransferase 31 family.</text>
</comment>
<comment type="sequence caution" evidence="6">
    <conflict type="erroneous gene model prediction">
        <sequence resource="EMBL-CDS" id="AAF87039"/>
    </conflict>
</comment>
<keyword id="KW-0325">Glycoprotein</keyword>
<keyword id="KW-0328">Glycosyltransferase</keyword>
<keyword id="KW-0333">Golgi apparatus</keyword>
<keyword id="KW-0464">Manganese</keyword>
<keyword id="KW-0472">Membrane</keyword>
<keyword id="KW-1185">Reference proteome</keyword>
<keyword id="KW-0735">Signal-anchor</keyword>
<keyword id="KW-0808">Transferase</keyword>
<keyword id="KW-0812">Transmembrane</keyword>
<keyword id="KW-1133">Transmembrane helix</keyword>
<feature type="chain" id="PRO_0000359425" description="Beta-1,3-galactosyltransferase GALT1">
    <location>
        <begin position="1"/>
        <end position="643"/>
    </location>
</feature>
<feature type="topological domain" description="Cytoplasmic" evidence="6">
    <location>
        <begin position="1"/>
        <end position="6"/>
    </location>
</feature>
<feature type="transmembrane region" description="Helical; Signal-anchor for type II membrane protein" evidence="1">
    <location>
        <begin position="7"/>
        <end position="23"/>
    </location>
</feature>
<feature type="topological domain" description="Lumenal" evidence="6">
    <location>
        <begin position="24"/>
        <end position="643"/>
    </location>
</feature>
<feature type="domain" description="Galectin" evidence="2">
    <location>
        <begin position="171"/>
        <end position="364"/>
    </location>
</feature>
<feature type="glycosylation site" description="N-linked (GlcNAc...) asparagine" evidence="1">
    <location>
        <position position="45"/>
    </location>
</feature>
<feature type="glycosylation site" description="N-linked (GlcNAc...) asparagine" evidence="1">
    <location>
        <position position="87"/>
    </location>
</feature>
<feature type="glycosylation site" description="N-linked (GlcNAc...) asparagine" evidence="1">
    <location>
        <position position="144"/>
    </location>
</feature>
<feature type="glycosylation site" description="N-linked (GlcNAc...) asparagine" evidence="1">
    <location>
        <position position="162"/>
    </location>
</feature>
<feature type="glycosylation site" description="N-linked (GlcNAc...) asparagine" evidence="1">
    <location>
        <position position="277"/>
    </location>
</feature>
<feature type="glycosylation site" description="N-linked (GlcNAc...) asparagine" evidence="1">
    <location>
        <position position="287"/>
    </location>
</feature>
<feature type="glycosylation site" description="N-linked (GlcNAc...) asparagine" evidence="1">
    <location>
        <position position="508"/>
    </location>
</feature>